<proteinExistence type="inferred from homology"/>
<keyword id="KW-1003">Cell membrane</keyword>
<keyword id="KW-0407">Ion channel</keyword>
<keyword id="KW-0406">Ion transport</keyword>
<keyword id="KW-0472">Membrane</keyword>
<keyword id="KW-0479">Metal-binding</keyword>
<keyword id="KW-0915">Sodium</keyword>
<keyword id="KW-0812">Transmembrane</keyword>
<keyword id="KW-1133">Transmembrane helix</keyword>
<keyword id="KW-0813">Transport</keyword>
<sequence>MNLKTTLLLIIGGGLGALARYYISGILPVYKDFPLGTLLVNSIASFILGYLYGLLFFGFEVSSEWRIFLGTGFCGGLSTFSTFSYETFSLLREGEYLLAFMNVVANVLVTITLVFLGFILARR</sequence>
<feature type="chain" id="PRO_0000110233" description="Fluoride-specific ion channel FluC">
    <location>
        <begin position="1"/>
        <end position="123"/>
    </location>
</feature>
<feature type="transmembrane region" description="Helical" evidence="1">
    <location>
        <begin position="7"/>
        <end position="27"/>
    </location>
</feature>
<feature type="transmembrane region" description="Helical" evidence="1">
    <location>
        <begin position="39"/>
        <end position="59"/>
    </location>
</feature>
<feature type="transmembrane region" description="Helical" evidence="1">
    <location>
        <begin position="67"/>
        <end position="87"/>
    </location>
</feature>
<feature type="transmembrane region" description="Helical" evidence="1">
    <location>
        <begin position="100"/>
        <end position="120"/>
    </location>
</feature>
<feature type="binding site" evidence="1">
    <location>
        <position position="75"/>
    </location>
    <ligand>
        <name>Na(+)</name>
        <dbReference type="ChEBI" id="CHEBI:29101"/>
        <note>structural</note>
    </ligand>
</feature>
<feature type="binding site" evidence="1">
    <location>
        <position position="78"/>
    </location>
    <ligand>
        <name>Na(+)</name>
        <dbReference type="ChEBI" id="CHEBI:29101"/>
        <note>structural</note>
    </ligand>
</feature>
<accession>Q9V0X2</accession>
<accession>G8ZJC5</accession>
<organism>
    <name type="scientific">Pyrococcus abyssi (strain GE5 / Orsay)</name>
    <dbReference type="NCBI Taxonomy" id="272844"/>
    <lineage>
        <taxon>Archaea</taxon>
        <taxon>Methanobacteriati</taxon>
        <taxon>Methanobacteriota</taxon>
        <taxon>Thermococci</taxon>
        <taxon>Thermococcales</taxon>
        <taxon>Thermococcaceae</taxon>
        <taxon>Pyrococcus</taxon>
    </lineage>
</organism>
<dbReference type="EMBL" id="AJ248285">
    <property type="protein sequence ID" value="CAB49580.1"/>
    <property type="molecule type" value="Genomic_DNA"/>
</dbReference>
<dbReference type="EMBL" id="HE613800">
    <property type="protein sequence ID" value="CCE70052.1"/>
    <property type="molecule type" value="Genomic_DNA"/>
</dbReference>
<dbReference type="PIR" id="C75108">
    <property type="entry name" value="C75108"/>
</dbReference>
<dbReference type="RefSeq" id="WP_010867782.1">
    <property type="nucleotide sequence ID" value="NC_000868.1"/>
</dbReference>
<dbReference type="SMR" id="Q9V0X2"/>
<dbReference type="STRING" id="272844.PAB1925"/>
<dbReference type="KEGG" id="pab:PAB1925"/>
<dbReference type="PATRIC" id="fig|272844.11.peg.697"/>
<dbReference type="eggNOG" id="arCOG04701">
    <property type="taxonomic scope" value="Archaea"/>
</dbReference>
<dbReference type="HOGENOM" id="CLU_114342_3_0_2"/>
<dbReference type="OrthoDB" id="253428at2157"/>
<dbReference type="PhylomeDB" id="Q9V0X2"/>
<dbReference type="Proteomes" id="UP000000810">
    <property type="component" value="Chromosome"/>
</dbReference>
<dbReference type="Proteomes" id="UP000009139">
    <property type="component" value="Chromosome"/>
</dbReference>
<dbReference type="GO" id="GO:0005886">
    <property type="term" value="C:plasma membrane"/>
    <property type="evidence" value="ECO:0007669"/>
    <property type="project" value="UniProtKB-SubCell"/>
</dbReference>
<dbReference type="GO" id="GO:0062054">
    <property type="term" value="F:fluoride channel activity"/>
    <property type="evidence" value="ECO:0007669"/>
    <property type="project" value="UniProtKB-UniRule"/>
</dbReference>
<dbReference type="GO" id="GO:0046872">
    <property type="term" value="F:metal ion binding"/>
    <property type="evidence" value="ECO:0007669"/>
    <property type="project" value="UniProtKB-KW"/>
</dbReference>
<dbReference type="GO" id="GO:0140114">
    <property type="term" value="P:cellular detoxification of fluoride"/>
    <property type="evidence" value="ECO:0007669"/>
    <property type="project" value="UniProtKB-UniRule"/>
</dbReference>
<dbReference type="HAMAP" id="MF_00454">
    <property type="entry name" value="FluC"/>
    <property type="match status" value="1"/>
</dbReference>
<dbReference type="InterPro" id="IPR003691">
    <property type="entry name" value="FluC"/>
</dbReference>
<dbReference type="NCBIfam" id="TIGR00494">
    <property type="entry name" value="crcB"/>
    <property type="match status" value="1"/>
</dbReference>
<dbReference type="PANTHER" id="PTHR28259">
    <property type="entry name" value="FLUORIDE EXPORT PROTEIN 1-RELATED"/>
    <property type="match status" value="1"/>
</dbReference>
<dbReference type="PANTHER" id="PTHR28259:SF1">
    <property type="entry name" value="FLUORIDE EXPORT PROTEIN 1-RELATED"/>
    <property type="match status" value="1"/>
</dbReference>
<dbReference type="Pfam" id="PF02537">
    <property type="entry name" value="CRCB"/>
    <property type="match status" value="1"/>
</dbReference>
<comment type="function">
    <text evidence="1">Fluoride-specific ion channel. Important for reducing fluoride concentration in the cell, thus reducing its toxicity.</text>
</comment>
<comment type="catalytic activity">
    <reaction evidence="1">
        <text>fluoride(in) = fluoride(out)</text>
        <dbReference type="Rhea" id="RHEA:76159"/>
        <dbReference type="ChEBI" id="CHEBI:17051"/>
    </reaction>
    <physiologicalReaction direction="left-to-right" evidence="1">
        <dbReference type="Rhea" id="RHEA:76160"/>
    </physiologicalReaction>
</comment>
<comment type="activity regulation">
    <text evidence="1">Na(+) is not transported, but it plays an essential structural role and its presence is essential for fluoride channel function.</text>
</comment>
<comment type="subcellular location">
    <subcellularLocation>
        <location evidence="1">Cell membrane</location>
        <topology evidence="1">Multi-pass membrane protein</topology>
    </subcellularLocation>
</comment>
<comment type="similarity">
    <text evidence="1">Belongs to the fluoride channel Fluc/FEX (TC 1.A.43) family.</text>
</comment>
<protein>
    <recommendedName>
        <fullName evidence="1">Fluoride-specific ion channel FluC</fullName>
    </recommendedName>
</protein>
<name>FLUC_PYRAB</name>
<reference key="1">
    <citation type="journal article" date="2003" name="Mol. Microbiol.">
        <title>An integrated analysis of the genome of the hyperthermophilic archaeon Pyrococcus abyssi.</title>
        <authorList>
            <person name="Cohen G.N."/>
            <person name="Barbe V."/>
            <person name="Flament D."/>
            <person name="Galperin M."/>
            <person name="Heilig R."/>
            <person name="Lecompte O."/>
            <person name="Poch O."/>
            <person name="Prieur D."/>
            <person name="Querellou J."/>
            <person name="Ripp R."/>
            <person name="Thierry J.-C."/>
            <person name="Van der Oost J."/>
            <person name="Weissenbach J."/>
            <person name="Zivanovic Y."/>
            <person name="Forterre P."/>
        </authorList>
    </citation>
    <scope>NUCLEOTIDE SEQUENCE [LARGE SCALE GENOMIC DNA]</scope>
    <source>
        <strain>GE5 / Orsay</strain>
    </source>
</reference>
<reference key="2">
    <citation type="journal article" date="2012" name="Curr. Microbiol.">
        <title>Re-annotation of two hyperthermophilic archaea Pyrococcus abyssi GE5 and Pyrococcus furiosus DSM 3638.</title>
        <authorList>
            <person name="Gao J."/>
            <person name="Wang J."/>
        </authorList>
    </citation>
    <scope>GENOME REANNOTATION</scope>
    <source>
        <strain>GE5 / Orsay</strain>
    </source>
</reference>
<gene>
    <name evidence="1" type="primary">fluC</name>
    <name evidence="1" type="synonym">crcB</name>
    <name type="ordered locus">PYRAB06670</name>
    <name type="ORF">PAB1925</name>
</gene>
<evidence type="ECO:0000255" key="1">
    <source>
        <dbReference type="HAMAP-Rule" id="MF_00454"/>
    </source>
</evidence>